<accession>B2RLY5</accession>
<gene>
    <name evidence="1" type="primary">rplP</name>
    <name type="ordered locus">PGN_1861</name>
</gene>
<evidence type="ECO:0000255" key="1">
    <source>
        <dbReference type="HAMAP-Rule" id="MF_01342"/>
    </source>
</evidence>
<evidence type="ECO:0000305" key="2"/>
<proteinExistence type="inferred from homology"/>
<sequence>MLQPKKTKFRRQQKGRMKGFAQRGNQLSFGSFGIKSLQSKWITGRQIEAARIAVTRYMQRQGQVWVRIFPDKPITKKGEGVRMGKGKGAPEGFVAPITPGRIIFEVEGVPYEIAKEALRLAAQKLPVTTKFVVRHDYDIQNQNA</sequence>
<feature type="chain" id="PRO_1000143009" description="Large ribosomal subunit protein uL16">
    <location>
        <begin position="1"/>
        <end position="144"/>
    </location>
</feature>
<keyword id="KW-0687">Ribonucleoprotein</keyword>
<keyword id="KW-0689">Ribosomal protein</keyword>
<keyword id="KW-0694">RNA-binding</keyword>
<keyword id="KW-0699">rRNA-binding</keyword>
<keyword id="KW-0820">tRNA-binding</keyword>
<reference key="1">
    <citation type="journal article" date="2008" name="DNA Res.">
        <title>Determination of the genome sequence of Porphyromonas gingivalis strain ATCC 33277 and genomic comparison with strain W83 revealed extensive genome rearrangements in P. gingivalis.</title>
        <authorList>
            <person name="Naito M."/>
            <person name="Hirakawa H."/>
            <person name="Yamashita A."/>
            <person name="Ohara N."/>
            <person name="Shoji M."/>
            <person name="Yukitake H."/>
            <person name="Nakayama K."/>
            <person name="Toh H."/>
            <person name="Yoshimura F."/>
            <person name="Kuhara S."/>
            <person name="Hattori M."/>
            <person name="Hayashi T."/>
            <person name="Nakayama K."/>
        </authorList>
    </citation>
    <scope>NUCLEOTIDE SEQUENCE [LARGE SCALE GENOMIC DNA]</scope>
    <source>
        <strain>ATCC 33277 / DSM 20709 / CIP 103683 / JCM 12257 / NCTC 11834 / 2561</strain>
    </source>
</reference>
<protein>
    <recommendedName>
        <fullName evidence="1">Large ribosomal subunit protein uL16</fullName>
    </recommendedName>
    <alternativeName>
        <fullName evidence="2">50S ribosomal protein L16</fullName>
    </alternativeName>
</protein>
<name>RL16_PORG3</name>
<organism>
    <name type="scientific">Porphyromonas gingivalis (strain ATCC 33277 / DSM 20709 / CIP 103683 / JCM 12257 / NCTC 11834 / 2561)</name>
    <dbReference type="NCBI Taxonomy" id="431947"/>
    <lineage>
        <taxon>Bacteria</taxon>
        <taxon>Pseudomonadati</taxon>
        <taxon>Bacteroidota</taxon>
        <taxon>Bacteroidia</taxon>
        <taxon>Bacteroidales</taxon>
        <taxon>Porphyromonadaceae</taxon>
        <taxon>Porphyromonas</taxon>
    </lineage>
</organism>
<dbReference type="EMBL" id="AP009380">
    <property type="protein sequence ID" value="BAG34380.1"/>
    <property type="molecule type" value="Genomic_DNA"/>
</dbReference>
<dbReference type="RefSeq" id="WP_010956445.1">
    <property type="nucleotide sequence ID" value="NZ_CP025930.1"/>
</dbReference>
<dbReference type="SMR" id="B2RLY5"/>
<dbReference type="GeneID" id="29257012"/>
<dbReference type="KEGG" id="pgn:PGN_1861"/>
<dbReference type="eggNOG" id="COG0197">
    <property type="taxonomic scope" value="Bacteria"/>
</dbReference>
<dbReference type="HOGENOM" id="CLU_078858_2_1_10"/>
<dbReference type="OrthoDB" id="9802589at2"/>
<dbReference type="BioCyc" id="PGIN431947:G1G2V-2075-MONOMER"/>
<dbReference type="Proteomes" id="UP000008842">
    <property type="component" value="Chromosome"/>
</dbReference>
<dbReference type="GO" id="GO:0022625">
    <property type="term" value="C:cytosolic large ribosomal subunit"/>
    <property type="evidence" value="ECO:0007669"/>
    <property type="project" value="TreeGrafter"/>
</dbReference>
<dbReference type="GO" id="GO:0019843">
    <property type="term" value="F:rRNA binding"/>
    <property type="evidence" value="ECO:0007669"/>
    <property type="project" value="UniProtKB-UniRule"/>
</dbReference>
<dbReference type="GO" id="GO:0003735">
    <property type="term" value="F:structural constituent of ribosome"/>
    <property type="evidence" value="ECO:0007669"/>
    <property type="project" value="InterPro"/>
</dbReference>
<dbReference type="GO" id="GO:0000049">
    <property type="term" value="F:tRNA binding"/>
    <property type="evidence" value="ECO:0007669"/>
    <property type="project" value="UniProtKB-KW"/>
</dbReference>
<dbReference type="GO" id="GO:0006412">
    <property type="term" value="P:translation"/>
    <property type="evidence" value="ECO:0007669"/>
    <property type="project" value="UniProtKB-UniRule"/>
</dbReference>
<dbReference type="CDD" id="cd01433">
    <property type="entry name" value="Ribosomal_L16_L10e"/>
    <property type="match status" value="1"/>
</dbReference>
<dbReference type="FunFam" id="3.90.1170.10:FF:000001">
    <property type="entry name" value="50S ribosomal protein L16"/>
    <property type="match status" value="1"/>
</dbReference>
<dbReference type="Gene3D" id="3.90.1170.10">
    <property type="entry name" value="Ribosomal protein L10e/L16"/>
    <property type="match status" value="1"/>
</dbReference>
<dbReference type="HAMAP" id="MF_01342">
    <property type="entry name" value="Ribosomal_uL16"/>
    <property type="match status" value="1"/>
</dbReference>
<dbReference type="InterPro" id="IPR047873">
    <property type="entry name" value="Ribosomal_uL16"/>
</dbReference>
<dbReference type="InterPro" id="IPR000114">
    <property type="entry name" value="Ribosomal_uL16_bact-type"/>
</dbReference>
<dbReference type="InterPro" id="IPR020798">
    <property type="entry name" value="Ribosomal_uL16_CS"/>
</dbReference>
<dbReference type="InterPro" id="IPR016180">
    <property type="entry name" value="Ribosomal_uL16_dom"/>
</dbReference>
<dbReference type="InterPro" id="IPR036920">
    <property type="entry name" value="Ribosomal_uL16_sf"/>
</dbReference>
<dbReference type="NCBIfam" id="TIGR01164">
    <property type="entry name" value="rplP_bact"/>
    <property type="match status" value="1"/>
</dbReference>
<dbReference type="PANTHER" id="PTHR12220">
    <property type="entry name" value="50S/60S RIBOSOMAL PROTEIN L16"/>
    <property type="match status" value="1"/>
</dbReference>
<dbReference type="PANTHER" id="PTHR12220:SF13">
    <property type="entry name" value="LARGE RIBOSOMAL SUBUNIT PROTEIN UL16M"/>
    <property type="match status" value="1"/>
</dbReference>
<dbReference type="Pfam" id="PF00252">
    <property type="entry name" value="Ribosomal_L16"/>
    <property type="match status" value="1"/>
</dbReference>
<dbReference type="PRINTS" id="PR00060">
    <property type="entry name" value="RIBOSOMALL16"/>
</dbReference>
<dbReference type="SUPFAM" id="SSF54686">
    <property type="entry name" value="Ribosomal protein L16p/L10e"/>
    <property type="match status" value="1"/>
</dbReference>
<dbReference type="PROSITE" id="PS00701">
    <property type="entry name" value="RIBOSOMAL_L16_2"/>
    <property type="match status" value="1"/>
</dbReference>
<comment type="function">
    <text evidence="1">Binds 23S rRNA and is also seen to make contacts with the A and possibly P site tRNAs.</text>
</comment>
<comment type="subunit">
    <text evidence="1">Part of the 50S ribosomal subunit.</text>
</comment>
<comment type="similarity">
    <text evidence="1">Belongs to the universal ribosomal protein uL16 family.</text>
</comment>